<feature type="peptide" id="PRO_0000419723" description="Leucokinin-like peptide" evidence="2">
    <location>
        <begin position="1"/>
        <end position="15"/>
    </location>
</feature>
<feature type="modified residue" description="Glycine amide" evidence="2">
    <location>
        <position position="15"/>
    </location>
</feature>
<reference evidence="4" key="1">
    <citation type="journal article" date="2012" name="PLoS ONE">
        <title>Peptidomics of the agriculturally damaging larval stage of the cabbage root fly Delia radicum (Diptera: Anthomyiidae).</title>
        <authorList>
            <person name="Zoephel J."/>
            <person name="Reiher W."/>
            <person name="Rexer K.-H."/>
            <person name="Kahnt J."/>
            <person name="Wegener C."/>
        </authorList>
    </citation>
    <scope>PROTEIN SEQUENCE</scope>
    <scope>TISSUE SPECIFICITY</scope>
    <scope>DEVELOPMENTAL STAGE</scope>
    <scope>MASS SPECTROMETRY</scope>
    <scope>AMIDATION AT GLY-15</scope>
    <source>
        <tissue evidence="2">CNS</tissue>
    </source>
</reference>
<proteinExistence type="evidence at protein level"/>
<protein>
    <recommendedName>
        <fullName evidence="3">Leucokinin-like peptide</fullName>
    </recommendedName>
</protein>
<keyword id="KW-0027">Amidation</keyword>
<keyword id="KW-0903">Direct protein sequencing</keyword>
<keyword id="KW-0527">Neuropeptide</keyword>
<keyword id="KW-0964">Secreted</keyword>
<sequence length="15" mass="1743">NSVVLGKKQRFHSWG</sequence>
<comment type="function">
    <text evidence="1">Acts through intracellular calcium in Malpighian tubule stellate cells to raise chloride conductance.</text>
</comment>
<comment type="subcellular location">
    <subcellularLocation>
        <location evidence="1">Secreted</location>
    </subcellularLocation>
</comment>
<comment type="tissue specificity">
    <text evidence="2">Expressed in the CNS but not in midgut, ring gland, thoracic perisympathetic organs (tPSO) or abdominal perisympathetic organs (aPSO) (at protein level).</text>
</comment>
<comment type="developmental stage">
    <text evidence="2">Detected in larvae.</text>
</comment>
<comment type="mass spectrometry" mass="1741.4" method="MALDI" evidence="2"/>
<accession>B3EWL0</accession>
<name>LCK1_DELRA</name>
<organism>
    <name type="scientific">Delia radicum</name>
    <name type="common">Cabbage root fly</name>
    <name type="synonym">Anthomyia brassicae</name>
    <dbReference type="NCBI Taxonomy" id="30064"/>
    <lineage>
        <taxon>Eukaryota</taxon>
        <taxon>Metazoa</taxon>
        <taxon>Ecdysozoa</taxon>
        <taxon>Arthropoda</taxon>
        <taxon>Hexapoda</taxon>
        <taxon>Insecta</taxon>
        <taxon>Pterygota</taxon>
        <taxon>Neoptera</taxon>
        <taxon>Endopterygota</taxon>
        <taxon>Diptera</taxon>
        <taxon>Brachycera</taxon>
        <taxon>Muscomorpha</taxon>
        <taxon>Muscoidea</taxon>
        <taxon>Anthomyiidae</taxon>
        <taxon>Anthomyiinae</taxon>
        <taxon>Delia</taxon>
    </lineage>
</organism>
<dbReference type="GO" id="GO:0005576">
    <property type="term" value="C:extracellular region"/>
    <property type="evidence" value="ECO:0007669"/>
    <property type="project" value="UniProtKB-SubCell"/>
</dbReference>
<dbReference type="GO" id="GO:0007218">
    <property type="term" value="P:neuropeptide signaling pathway"/>
    <property type="evidence" value="ECO:0007669"/>
    <property type="project" value="UniProtKB-KW"/>
</dbReference>
<evidence type="ECO:0000250" key="1">
    <source>
        <dbReference type="UniProtKB" id="P81829"/>
    </source>
</evidence>
<evidence type="ECO:0000269" key="2">
    <source>
    </source>
</evidence>
<evidence type="ECO:0000303" key="3">
    <source>
    </source>
</evidence>
<evidence type="ECO:0000305" key="4"/>